<organism>
    <name type="scientific">Streptococcus pneumoniae (strain JJA)</name>
    <dbReference type="NCBI Taxonomy" id="488222"/>
    <lineage>
        <taxon>Bacteria</taxon>
        <taxon>Bacillati</taxon>
        <taxon>Bacillota</taxon>
        <taxon>Bacilli</taxon>
        <taxon>Lactobacillales</taxon>
        <taxon>Streptococcaceae</taxon>
        <taxon>Streptococcus</taxon>
    </lineage>
</organism>
<sequence>MEIEKTNRMNALFEFYAALLTDKQMNYIELYYADDYSLAEIAEEFGVSRQAVYDNIKRTEKILEDYEMKLHMYSDYIVRSQIFDQILERYPKDNFLQEQIEILTSIDNRE</sequence>
<reference key="1">
    <citation type="journal article" date="2010" name="Genome Biol.">
        <title>Structure and dynamics of the pan-genome of Streptococcus pneumoniae and closely related species.</title>
        <authorList>
            <person name="Donati C."/>
            <person name="Hiller N.L."/>
            <person name="Tettelin H."/>
            <person name="Muzzi A."/>
            <person name="Croucher N.J."/>
            <person name="Angiuoli S.V."/>
            <person name="Oggioni M."/>
            <person name="Dunning Hotopp J.C."/>
            <person name="Hu F.Z."/>
            <person name="Riley D.R."/>
            <person name="Covacci A."/>
            <person name="Mitchell T.J."/>
            <person name="Bentley S.D."/>
            <person name="Kilian M."/>
            <person name="Ehrlich G.D."/>
            <person name="Rappuoli R."/>
            <person name="Moxon E.R."/>
            <person name="Masignani V."/>
        </authorList>
    </citation>
    <scope>NUCLEOTIDE SEQUENCE [LARGE SCALE GENOMIC DNA]</scope>
    <source>
        <strain>JJA</strain>
    </source>
</reference>
<evidence type="ECO:0000255" key="1">
    <source>
        <dbReference type="HAMAP-Rule" id="MF_00245"/>
    </source>
</evidence>
<proteinExistence type="inferred from homology"/>
<accession>C1CEP3</accession>
<name>Y1203_STRZJ</name>
<feature type="chain" id="PRO_1000197595" description="UPF0122 protein SPJ_1203">
    <location>
        <begin position="1"/>
        <end position="110"/>
    </location>
</feature>
<protein>
    <recommendedName>
        <fullName evidence="1">UPF0122 protein SPJ_1203</fullName>
    </recommendedName>
</protein>
<dbReference type="EMBL" id="CP000919">
    <property type="protein sequence ID" value="ACO19392.1"/>
    <property type="molecule type" value="Genomic_DNA"/>
</dbReference>
<dbReference type="RefSeq" id="WP_000402071.1">
    <property type="nucleotide sequence ID" value="NC_012466.1"/>
</dbReference>
<dbReference type="SMR" id="C1CEP3"/>
<dbReference type="KEGG" id="sjj:SPJ_1203"/>
<dbReference type="HOGENOM" id="CLU_129218_1_0_9"/>
<dbReference type="Proteomes" id="UP000002206">
    <property type="component" value="Chromosome"/>
</dbReference>
<dbReference type="Gene3D" id="1.10.10.10">
    <property type="entry name" value="Winged helix-like DNA-binding domain superfamily/Winged helix DNA-binding domain"/>
    <property type="match status" value="1"/>
</dbReference>
<dbReference type="HAMAP" id="MF_00245">
    <property type="entry name" value="UPF0122"/>
    <property type="match status" value="1"/>
</dbReference>
<dbReference type="InterPro" id="IPR013324">
    <property type="entry name" value="RNA_pol_sigma_r3/r4-like"/>
</dbReference>
<dbReference type="InterPro" id="IPR007394">
    <property type="entry name" value="UPF0122"/>
</dbReference>
<dbReference type="InterPro" id="IPR054831">
    <property type="entry name" value="UPF0122_fam_protein"/>
</dbReference>
<dbReference type="InterPro" id="IPR036388">
    <property type="entry name" value="WH-like_DNA-bd_sf"/>
</dbReference>
<dbReference type="NCBIfam" id="NF001066">
    <property type="entry name" value="PRK00118.1-1"/>
    <property type="match status" value="1"/>
</dbReference>
<dbReference type="NCBIfam" id="NF001068">
    <property type="entry name" value="PRK00118.1-4"/>
    <property type="match status" value="1"/>
</dbReference>
<dbReference type="NCBIfam" id="NF001070">
    <property type="entry name" value="PRK00118.1-6"/>
    <property type="match status" value="1"/>
</dbReference>
<dbReference type="NCBIfam" id="NF045758">
    <property type="entry name" value="YlxM"/>
    <property type="match status" value="1"/>
</dbReference>
<dbReference type="PANTHER" id="PTHR40083">
    <property type="entry name" value="UPF0122 PROTEIN CBO2450/CLC_2298"/>
    <property type="match status" value="1"/>
</dbReference>
<dbReference type="PANTHER" id="PTHR40083:SF1">
    <property type="entry name" value="UPF0122 PROTEIN YLXM"/>
    <property type="match status" value="1"/>
</dbReference>
<dbReference type="Pfam" id="PF04297">
    <property type="entry name" value="UPF0122"/>
    <property type="match status" value="1"/>
</dbReference>
<dbReference type="SUPFAM" id="SSF88659">
    <property type="entry name" value="Sigma3 and sigma4 domains of RNA polymerase sigma factors"/>
    <property type="match status" value="1"/>
</dbReference>
<gene>
    <name type="ordered locus">SPJ_1203</name>
</gene>
<comment type="function">
    <text evidence="1">Might take part in the signal recognition particle (SRP) pathway. This is inferred from the conservation of its genetic proximity to ftsY/ffh. May be a regulatory protein.</text>
</comment>
<comment type="similarity">
    <text evidence="1">Belongs to the UPF0122 family.</text>
</comment>